<dbReference type="EMBL" id="CH445344">
    <property type="protein sequence ID" value="EAT80751.2"/>
    <property type="molecule type" value="Genomic_DNA"/>
</dbReference>
<dbReference type="RefSeq" id="XP_001801947.1">
    <property type="nucleotide sequence ID" value="XM_001801895.1"/>
</dbReference>
<dbReference type="SMR" id="Q0U957"/>
<dbReference type="STRING" id="321614.Q0U957"/>
<dbReference type="EnsemblFungi" id="SNOT_11707">
    <property type="protein sequence ID" value="SNOT_11707"/>
    <property type="gene ID" value="SNOG_11707"/>
</dbReference>
<dbReference type="GeneID" id="5978855"/>
<dbReference type="KEGG" id="pno:SNOG_11707"/>
<dbReference type="VEuPathDB" id="FungiDB:JI435_117070"/>
<dbReference type="eggNOG" id="KOG4086">
    <property type="taxonomic scope" value="Eukaryota"/>
</dbReference>
<dbReference type="HOGENOM" id="CLU_071681_4_1_1"/>
<dbReference type="InParanoid" id="Q0U957"/>
<dbReference type="OrthoDB" id="10257739at2759"/>
<dbReference type="Proteomes" id="UP000001055">
    <property type="component" value="Unassembled WGS sequence"/>
</dbReference>
<dbReference type="GO" id="GO:0070847">
    <property type="term" value="C:core mediator complex"/>
    <property type="evidence" value="ECO:0000318"/>
    <property type="project" value="GO_Central"/>
</dbReference>
<dbReference type="GO" id="GO:0016592">
    <property type="term" value="C:mediator complex"/>
    <property type="evidence" value="ECO:0000318"/>
    <property type="project" value="GO_Central"/>
</dbReference>
<dbReference type="GO" id="GO:0003712">
    <property type="term" value="F:transcription coregulator activity"/>
    <property type="evidence" value="ECO:0007669"/>
    <property type="project" value="InterPro"/>
</dbReference>
<dbReference type="GO" id="GO:0006357">
    <property type="term" value="P:regulation of transcription by RNA polymerase II"/>
    <property type="evidence" value="ECO:0000318"/>
    <property type="project" value="GO_Central"/>
</dbReference>
<dbReference type="FunFam" id="1.10.10.1340:FF:000002">
    <property type="entry name" value="Mediator of RNA polymerase II transcription subunit 31"/>
    <property type="match status" value="1"/>
</dbReference>
<dbReference type="Gene3D" id="1.10.10.1340">
    <property type="entry name" value="Mediator of RNA polymerase II, submodule Med31 (Soh1)"/>
    <property type="match status" value="1"/>
</dbReference>
<dbReference type="InterPro" id="IPR038089">
    <property type="entry name" value="Med31_sf"/>
</dbReference>
<dbReference type="InterPro" id="IPR008831">
    <property type="entry name" value="Mediator_Med31"/>
</dbReference>
<dbReference type="PANTHER" id="PTHR13186">
    <property type="entry name" value="MEDIATOR OF RNA POLYMERASE II TRANSCRIPTION SUBUNIT 31"/>
    <property type="match status" value="1"/>
</dbReference>
<dbReference type="Pfam" id="PF05669">
    <property type="entry name" value="Med31"/>
    <property type="match status" value="1"/>
</dbReference>
<evidence type="ECO:0000250" key="1"/>
<evidence type="ECO:0000305" key="2"/>
<feature type="chain" id="PRO_0000305729" description="Mediator of RNA polymerase II transcription subunit 31">
    <location>
        <begin position="1"/>
        <end position="115"/>
    </location>
</feature>
<comment type="function">
    <text evidence="1">Component of the Mediator complex, a coactivator involved in the regulated transcription of nearly all RNA polymerase II-dependent genes. Mediator functions as a bridge to convey information from gene-specific regulatory proteins to the basal RNA polymerase II transcription machinery. Mediator is recruited to promoters by direct interactions with regulatory proteins and serves as a scaffold for the assembly of a functional preinitiation complex with RNA polymerase II and the general transcription factors (By similarity).</text>
</comment>
<comment type="subunit">
    <text evidence="1">Component of the Mediator complex.</text>
</comment>
<comment type="subcellular location">
    <subcellularLocation>
        <location evidence="1">Nucleus</location>
    </subcellularLocation>
</comment>
<comment type="similarity">
    <text evidence="2">Belongs to the Mediator complex subunit 31 family.</text>
</comment>
<protein>
    <recommendedName>
        <fullName>Mediator of RNA polymerase II transcription subunit 31</fullName>
    </recommendedName>
    <alternativeName>
        <fullName>Mediator complex subunit 31</fullName>
    </alternativeName>
</protein>
<proteinExistence type="inferred from homology"/>
<reference key="1">
    <citation type="journal article" date="2007" name="Plant Cell">
        <title>Dothideomycete-plant interactions illuminated by genome sequencing and EST analysis of the wheat pathogen Stagonospora nodorum.</title>
        <authorList>
            <person name="Hane J.K."/>
            <person name="Lowe R.G.T."/>
            <person name="Solomon P.S."/>
            <person name="Tan K.-C."/>
            <person name="Schoch C.L."/>
            <person name="Spatafora J.W."/>
            <person name="Crous P.W."/>
            <person name="Kodira C.D."/>
            <person name="Birren B.W."/>
            <person name="Galagan J.E."/>
            <person name="Torriani S.F.F."/>
            <person name="McDonald B.A."/>
            <person name="Oliver R.P."/>
        </authorList>
    </citation>
    <scope>NUCLEOTIDE SEQUENCE [LARGE SCALE GENOMIC DNA]</scope>
    <source>
        <strain>SN15 / ATCC MYA-4574 / FGSC 10173</strain>
    </source>
</reference>
<accession>Q0U957</accession>
<gene>
    <name type="primary">SOH1</name>
    <name type="synonym">MED31</name>
    <name type="ORF">SNOG_11707</name>
</gene>
<organism>
    <name type="scientific">Phaeosphaeria nodorum (strain SN15 / ATCC MYA-4574 / FGSC 10173)</name>
    <name type="common">Glume blotch fungus</name>
    <name type="synonym">Parastagonospora nodorum</name>
    <dbReference type="NCBI Taxonomy" id="321614"/>
    <lineage>
        <taxon>Eukaryota</taxon>
        <taxon>Fungi</taxon>
        <taxon>Dikarya</taxon>
        <taxon>Ascomycota</taxon>
        <taxon>Pezizomycotina</taxon>
        <taxon>Dothideomycetes</taxon>
        <taxon>Pleosporomycetidae</taxon>
        <taxon>Pleosporales</taxon>
        <taxon>Pleosporineae</taxon>
        <taxon>Phaeosphaeriaceae</taxon>
        <taxon>Parastagonospora</taxon>
    </lineage>
</organism>
<name>MED31_PHANO</name>
<keyword id="KW-0010">Activator</keyword>
<keyword id="KW-0539">Nucleus</keyword>
<keyword id="KW-0804">Transcription</keyword>
<keyword id="KW-0805">Transcription regulation</keyword>
<sequence length="115" mass="13382">MASPPAQERPDVPLHGGFTRFELELEFVQCLANPVYLNYLATQKYFDKPEFVAYLDYLQYFAEPKYIKFLHHPGPTLRALELLQQERFRQDIITPGLANKLQIEGQRNAVPSQKD</sequence>